<feature type="chain" id="PRO_1000115171" description="Homoserine O-succinyltransferase">
    <location>
        <begin position="1"/>
        <end position="312"/>
    </location>
</feature>
<feature type="active site" description="Acyl-thioester intermediate" evidence="1">
    <location>
        <position position="142"/>
    </location>
</feature>
<feature type="active site" description="Proton acceptor" evidence="1">
    <location>
        <position position="235"/>
    </location>
</feature>
<feature type="active site" evidence="1">
    <location>
        <position position="237"/>
    </location>
</feature>
<feature type="binding site" evidence="1">
    <location>
        <position position="163"/>
    </location>
    <ligand>
        <name>substrate</name>
    </ligand>
</feature>
<feature type="binding site" evidence="1">
    <location>
        <position position="192"/>
    </location>
    <ligand>
        <name>substrate</name>
    </ligand>
</feature>
<feature type="binding site" evidence="1">
    <location>
        <position position="249"/>
    </location>
    <ligand>
        <name>substrate</name>
    </ligand>
</feature>
<feature type="site" description="Important for acyl-CoA specificity" evidence="1">
    <location>
        <position position="111"/>
    </location>
</feature>
<feature type="site" description="Important for substrate specificity" evidence="1">
    <location>
        <position position="192"/>
    </location>
</feature>
<proteinExistence type="inferred from homology"/>
<keyword id="KW-0012">Acyltransferase</keyword>
<keyword id="KW-0028">Amino-acid biosynthesis</keyword>
<keyword id="KW-0963">Cytoplasm</keyword>
<keyword id="KW-0486">Methionine biosynthesis</keyword>
<keyword id="KW-0808">Transferase</keyword>
<protein>
    <recommendedName>
        <fullName evidence="1">Homoserine O-succinyltransferase</fullName>
        <shortName evidence="1">HST</shortName>
        <ecNumber evidence="1">2.3.1.46</ecNumber>
    </recommendedName>
    <alternativeName>
        <fullName evidence="1">Homoserine transsuccinylase</fullName>
        <shortName evidence="1">HTS</shortName>
    </alternativeName>
</protein>
<reference key="1">
    <citation type="journal article" date="2008" name="BMC Genomics">
        <title>The genome sequence of the fish pathogen Aliivibrio salmonicida strain LFI1238 shows extensive evidence of gene decay.</title>
        <authorList>
            <person name="Hjerde E."/>
            <person name="Lorentzen M.S."/>
            <person name="Holden M.T."/>
            <person name="Seeger K."/>
            <person name="Paulsen S."/>
            <person name="Bason N."/>
            <person name="Churcher C."/>
            <person name="Harris D."/>
            <person name="Norbertczak H."/>
            <person name="Quail M.A."/>
            <person name="Sanders S."/>
            <person name="Thurston S."/>
            <person name="Parkhill J."/>
            <person name="Willassen N.P."/>
            <person name="Thomson N.R."/>
        </authorList>
    </citation>
    <scope>NUCLEOTIDE SEQUENCE [LARGE SCALE GENOMIC DNA]</scope>
    <source>
        <strain>LFI1238</strain>
    </source>
</reference>
<sequence length="312" mass="36198">MPIRIPDQLPAAEVLREENIFVMQESRATTQAIRPLKVIILNLMPKKIETETQFLRLLSNSPLQVDVELLRIDNRTSKNTPTEHLDTFYRQFEGIKNRNFDGLIITGAPLGLVQFEDVIYWEHLQTIMTWAKDHVTSSLYVCWAAQAGLKLLYDLPKRTRKEKLSGVYKHTNLEQHHPILRGFDDQFLAPHSHYADFSADYLNAHTDLDILATSKEAGVYLASTKDKRNVFVTGHPEYDSLTLHNEYLRDLGEGMEPIIPVNYYPDDNPDIPPKATWRSHGHLLFSNWLNYCVYQQTPYDLDHFSELNFTRD</sequence>
<accession>B6EKK3</accession>
<comment type="function">
    <text evidence="1">Transfers a succinyl group from succinyl-CoA to L-homoserine, forming succinyl-L-homoserine.</text>
</comment>
<comment type="catalytic activity">
    <reaction evidence="1">
        <text>L-homoserine + succinyl-CoA = O-succinyl-L-homoserine + CoA</text>
        <dbReference type="Rhea" id="RHEA:22008"/>
        <dbReference type="ChEBI" id="CHEBI:57287"/>
        <dbReference type="ChEBI" id="CHEBI:57292"/>
        <dbReference type="ChEBI" id="CHEBI:57476"/>
        <dbReference type="ChEBI" id="CHEBI:57661"/>
        <dbReference type="EC" id="2.3.1.46"/>
    </reaction>
</comment>
<comment type="pathway">
    <text evidence="1">Amino-acid biosynthesis; L-methionine biosynthesis via de novo pathway; O-succinyl-L-homoserine from L-homoserine: step 1/1.</text>
</comment>
<comment type="subcellular location">
    <subcellularLocation>
        <location evidence="1">Cytoplasm</location>
    </subcellularLocation>
</comment>
<comment type="similarity">
    <text evidence="1">Belongs to the MetA family.</text>
</comment>
<dbReference type="EC" id="2.3.1.46" evidence="1"/>
<dbReference type="EMBL" id="FM178379">
    <property type="protein sequence ID" value="CAQ80183.1"/>
    <property type="molecule type" value="Genomic_DNA"/>
</dbReference>
<dbReference type="RefSeq" id="WP_012550971.1">
    <property type="nucleotide sequence ID" value="NC_011312.1"/>
</dbReference>
<dbReference type="SMR" id="B6EKK3"/>
<dbReference type="KEGG" id="vsa:VSAL_I2499"/>
<dbReference type="eggNOG" id="COG1897">
    <property type="taxonomic scope" value="Bacteria"/>
</dbReference>
<dbReference type="HOGENOM" id="CLU_057851_0_1_6"/>
<dbReference type="UniPathway" id="UPA00051">
    <property type="reaction ID" value="UER00075"/>
</dbReference>
<dbReference type="Proteomes" id="UP000001730">
    <property type="component" value="Chromosome 1"/>
</dbReference>
<dbReference type="GO" id="GO:0005737">
    <property type="term" value="C:cytoplasm"/>
    <property type="evidence" value="ECO:0007669"/>
    <property type="project" value="UniProtKB-SubCell"/>
</dbReference>
<dbReference type="GO" id="GO:0004414">
    <property type="term" value="F:homoserine O-acetyltransferase activity"/>
    <property type="evidence" value="ECO:0007669"/>
    <property type="project" value="UniProtKB-UniRule"/>
</dbReference>
<dbReference type="GO" id="GO:0008899">
    <property type="term" value="F:homoserine O-succinyltransferase activity"/>
    <property type="evidence" value="ECO:0007669"/>
    <property type="project" value="UniProtKB-EC"/>
</dbReference>
<dbReference type="GO" id="GO:0019281">
    <property type="term" value="P:L-methionine biosynthetic process from homoserine via O-succinyl-L-homoserine and cystathionine"/>
    <property type="evidence" value="ECO:0007669"/>
    <property type="project" value="InterPro"/>
</dbReference>
<dbReference type="CDD" id="cd03131">
    <property type="entry name" value="GATase1_HTS"/>
    <property type="match status" value="1"/>
</dbReference>
<dbReference type="FunFam" id="3.40.50.880:FF:000004">
    <property type="entry name" value="Homoserine O-succinyltransferase"/>
    <property type="match status" value="1"/>
</dbReference>
<dbReference type="Gene3D" id="3.40.50.880">
    <property type="match status" value="1"/>
</dbReference>
<dbReference type="HAMAP" id="MF_00295">
    <property type="entry name" value="MetA_acyltransf"/>
    <property type="match status" value="1"/>
</dbReference>
<dbReference type="InterPro" id="IPR029062">
    <property type="entry name" value="Class_I_gatase-like"/>
</dbReference>
<dbReference type="InterPro" id="IPR005697">
    <property type="entry name" value="HST_MetA"/>
</dbReference>
<dbReference type="InterPro" id="IPR033752">
    <property type="entry name" value="MetA_family"/>
</dbReference>
<dbReference type="NCBIfam" id="TIGR01001">
    <property type="entry name" value="metA"/>
    <property type="match status" value="1"/>
</dbReference>
<dbReference type="PANTHER" id="PTHR20919">
    <property type="entry name" value="HOMOSERINE O-SUCCINYLTRANSFERASE"/>
    <property type="match status" value="1"/>
</dbReference>
<dbReference type="PANTHER" id="PTHR20919:SF0">
    <property type="entry name" value="HOMOSERINE O-SUCCINYLTRANSFERASE"/>
    <property type="match status" value="1"/>
</dbReference>
<dbReference type="Pfam" id="PF04204">
    <property type="entry name" value="HTS"/>
    <property type="match status" value="1"/>
</dbReference>
<dbReference type="PIRSF" id="PIRSF000450">
    <property type="entry name" value="H_ser_succinyltr"/>
    <property type="match status" value="1"/>
</dbReference>
<dbReference type="SUPFAM" id="SSF52317">
    <property type="entry name" value="Class I glutamine amidotransferase-like"/>
    <property type="match status" value="1"/>
</dbReference>
<organism>
    <name type="scientific">Aliivibrio salmonicida (strain LFI1238)</name>
    <name type="common">Vibrio salmonicida (strain LFI1238)</name>
    <dbReference type="NCBI Taxonomy" id="316275"/>
    <lineage>
        <taxon>Bacteria</taxon>
        <taxon>Pseudomonadati</taxon>
        <taxon>Pseudomonadota</taxon>
        <taxon>Gammaproteobacteria</taxon>
        <taxon>Vibrionales</taxon>
        <taxon>Vibrionaceae</taxon>
        <taxon>Aliivibrio</taxon>
    </lineage>
</organism>
<gene>
    <name evidence="1" type="primary">metAS</name>
    <name type="ordered locus">VSAL_I2499</name>
</gene>
<evidence type="ECO:0000255" key="1">
    <source>
        <dbReference type="HAMAP-Rule" id="MF_00295"/>
    </source>
</evidence>
<name>METAS_ALISL</name>